<proteinExistence type="inferred from homology"/>
<gene>
    <name evidence="1" type="primary">rbfA</name>
    <name type="ordered locus">CLB_2281</name>
</gene>
<dbReference type="EMBL" id="CP000726">
    <property type="protein sequence ID" value="ABS34750.1"/>
    <property type="molecule type" value="Genomic_DNA"/>
</dbReference>
<dbReference type="RefSeq" id="WP_011986791.1">
    <property type="nucleotide sequence ID" value="NC_009697.1"/>
</dbReference>
<dbReference type="SMR" id="A7FVZ2"/>
<dbReference type="GeneID" id="5204287"/>
<dbReference type="KEGG" id="cba:CLB_2281"/>
<dbReference type="HOGENOM" id="CLU_089475_6_3_9"/>
<dbReference type="GO" id="GO:0005829">
    <property type="term" value="C:cytosol"/>
    <property type="evidence" value="ECO:0007669"/>
    <property type="project" value="TreeGrafter"/>
</dbReference>
<dbReference type="GO" id="GO:0043024">
    <property type="term" value="F:ribosomal small subunit binding"/>
    <property type="evidence" value="ECO:0007669"/>
    <property type="project" value="TreeGrafter"/>
</dbReference>
<dbReference type="GO" id="GO:0030490">
    <property type="term" value="P:maturation of SSU-rRNA"/>
    <property type="evidence" value="ECO:0007669"/>
    <property type="project" value="UniProtKB-UniRule"/>
</dbReference>
<dbReference type="FunFam" id="3.30.300.20:FF:000030">
    <property type="entry name" value="Ribosome-binding factor A"/>
    <property type="match status" value="1"/>
</dbReference>
<dbReference type="Gene3D" id="3.30.300.20">
    <property type="match status" value="1"/>
</dbReference>
<dbReference type="HAMAP" id="MF_00003">
    <property type="entry name" value="RbfA"/>
    <property type="match status" value="1"/>
</dbReference>
<dbReference type="InterPro" id="IPR015946">
    <property type="entry name" value="KH_dom-like_a/b"/>
</dbReference>
<dbReference type="InterPro" id="IPR000238">
    <property type="entry name" value="RbfA"/>
</dbReference>
<dbReference type="InterPro" id="IPR023799">
    <property type="entry name" value="RbfA_dom_sf"/>
</dbReference>
<dbReference type="InterPro" id="IPR020053">
    <property type="entry name" value="Ribosome-bd_factorA_CS"/>
</dbReference>
<dbReference type="NCBIfam" id="TIGR00082">
    <property type="entry name" value="rbfA"/>
    <property type="match status" value="1"/>
</dbReference>
<dbReference type="PANTHER" id="PTHR33515">
    <property type="entry name" value="RIBOSOME-BINDING FACTOR A, CHLOROPLASTIC-RELATED"/>
    <property type="match status" value="1"/>
</dbReference>
<dbReference type="PANTHER" id="PTHR33515:SF1">
    <property type="entry name" value="RIBOSOME-BINDING FACTOR A, CHLOROPLASTIC-RELATED"/>
    <property type="match status" value="1"/>
</dbReference>
<dbReference type="Pfam" id="PF02033">
    <property type="entry name" value="RBFA"/>
    <property type="match status" value="1"/>
</dbReference>
<dbReference type="SUPFAM" id="SSF89919">
    <property type="entry name" value="Ribosome-binding factor A, RbfA"/>
    <property type="match status" value="1"/>
</dbReference>
<dbReference type="PROSITE" id="PS01319">
    <property type="entry name" value="RBFA"/>
    <property type="match status" value="1"/>
</dbReference>
<reference key="1">
    <citation type="journal article" date="2007" name="PLoS ONE">
        <title>Analysis of the neurotoxin complex genes in Clostridium botulinum A1-A4 and B1 strains: BoNT/A3, /Ba4 and /B1 clusters are located within plasmids.</title>
        <authorList>
            <person name="Smith T.J."/>
            <person name="Hill K.K."/>
            <person name="Foley B.T."/>
            <person name="Detter J.C."/>
            <person name="Munk A.C."/>
            <person name="Bruce D.C."/>
            <person name="Doggett N.A."/>
            <person name="Smith L.A."/>
            <person name="Marks J.D."/>
            <person name="Xie G."/>
            <person name="Brettin T.S."/>
        </authorList>
    </citation>
    <scope>NUCLEOTIDE SEQUENCE [LARGE SCALE GENOMIC DNA]</scope>
    <source>
        <strain>ATCC 19397 / Type A</strain>
    </source>
</reference>
<keyword id="KW-0963">Cytoplasm</keyword>
<keyword id="KW-0690">Ribosome biogenesis</keyword>
<evidence type="ECO:0000255" key="1">
    <source>
        <dbReference type="HAMAP-Rule" id="MF_00003"/>
    </source>
</evidence>
<name>RBFA_CLOB1</name>
<sequence length="120" mass="13683">MAKYRAGRINEEVKKEVSNIIHNDIKDPRLSAMVSVTDVNVTKDLKYAKVYVSIFGNEKAKEESLEALKSSVGFIRKEVGRRVKLRNTPEVIIEVDNSIERGMHIDELLHSIKENESNDN</sequence>
<feature type="chain" id="PRO_1000000094" description="Ribosome-binding factor A">
    <location>
        <begin position="1"/>
        <end position="120"/>
    </location>
</feature>
<accession>A7FVZ2</accession>
<comment type="function">
    <text evidence="1">One of several proteins that assist in the late maturation steps of the functional core of the 30S ribosomal subunit. Associates with free 30S ribosomal subunits (but not with 30S subunits that are part of 70S ribosomes or polysomes). Required for efficient processing of 16S rRNA. May interact with the 5'-terminal helix region of 16S rRNA.</text>
</comment>
<comment type="subunit">
    <text evidence="1">Monomer. Binds 30S ribosomal subunits, but not 50S ribosomal subunits or 70S ribosomes.</text>
</comment>
<comment type="subcellular location">
    <subcellularLocation>
        <location evidence="1">Cytoplasm</location>
    </subcellularLocation>
</comment>
<comment type="similarity">
    <text evidence="1">Belongs to the RbfA family.</text>
</comment>
<organism>
    <name type="scientific">Clostridium botulinum (strain ATCC 19397 / Type A)</name>
    <dbReference type="NCBI Taxonomy" id="441770"/>
    <lineage>
        <taxon>Bacteria</taxon>
        <taxon>Bacillati</taxon>
        <taxon>Bacillota</taxon>
        <taxon>Clostridia</taxon>
        <taxon>Eubacteriales</taxon>
        <taxon>Clostridiaceae</taxon>
        <taxon>Clostridium</taxon>
    </lineage>
</organism>
<protein>
    <recommendedName>
        <fullName evidence="1">Ribosome-binding factor A</fullName>
    </recommendedName>
</protein>